<keyword id="KW-0002">3D-structure</keyword>
<keyword id="KW-0963">Cytoplasm</keyword>
<keyword id="KW-0539">Nucleus</keyword>
<keyword id="KW-0597">Phosphoprotein</keyword>
<keyword id="KW-1185">Reference proteome</keyword>
<keyword id="KW-0687">Ribonucleoprotein</keyword>
<keyword id="KW-0689">Ribosomal protein</keyword>
<reference key="1">
    <citation type="journal article" date="2002" name="Nature">
        <title>The genome sequence of Schizosaccharomyces pombe.</title>
        <authorList>
            <person name="Wood V."/>
            <person name="Gwilliam R."/>
            <person name="Rajandream M.A."/>
            <person name="Lyne M.H."/>
            <person name="Lyne R."/>
            <person name="Stewart A."/>
            <person name="Sgouros J.G."/>
            <person name="Peat N."/>
            <person name="Hayles J."/>
            <person name="Baker S.G."/>
            <person name="Basham D."/>
            <person name="Bowman S."/>
            <person name="Brooks K."/>
            <person name="Brown D."/>
            <person name="Brown S."/>
            <person name="Chillingworth T."/>
            <person name="Churcher C.M."/>
            <person name="Collins M."/>
            <person name="Connor R."/>
            <person name="Cronin A."/>
            <person name="Davis P."/>
            <person name="Feltwell T."/>
            <person name="Fraser A."/>
            <person name="Gentles S."/>
            <person name="Goble A."/>
            <person name="Hamlin N."/>
            <person name="Harris D.E."/>
            <person name="Hidalgo J."/>
            <person name="Hodgson G."/>
            <person name="Holroyd S."/>
            <person name="Hornsby T."/>
            <person name="Howarth S."/>
            <person name="Huckle E.J."/>
            <person name="Hunt S."/>
            <person name="Jagels K."/>
            <person name="James K.D."/>
            <person name="Jones L."/>
            <person name="Jones M."/>
            <person name="Leather S."/>
            <person name="McDonald S."/>
            <person name="McLean J."/>
            <person name="Mooney P."/>
            <person name="Moule S."/>
            <person name="Mungall K.L."/>
            <person name="Murphy L.D."/>
            <person name="Niblett D."/>
            <person name="Odell C."/>
            <person name="Oliver K."/>
            <person name="O'Neil S."/>
            <person name="Pearson D."/>
            <person name="Quail M.A."/>
            <person name="Rabbinowitsch E."/>
            <person name="Rutherford K.M."/>
            <person name="Rutter S."/>
            <person name="Saunders D."/>
            <person name="Seeger K."/>
            <person name="Sharp S."/>
            <person name="Skelton J."/>
            <person name="Simmonds M.N."/>
            <person name="Squares R."/>
            <person name="Squares S."/>
            <person name="Stevens K."/>
            <person name="Taylor K."/>
            <person name="Taylor R.G."/>
            <person name="Tivey A."/>
            <person name="Walsh S.V."/>
            <person name="Warren T."/>
            <person name="Whitehead S."/>
            <person name="Woodward J.R."/>
            <person name="Volckaert G."/>
            <person name="Aert R."/>
            <person name="Robben J."/>
            <person name="Grymonprez B."/>
            <person name="Weltjens I."/>
            <person name="Vanstreels E."/>
            <person name="Rieger M."/>
            <person name="Schaefer M."/>
            <person name="Mueller-Auer S."/>
            <person name="Gabel C."/>
            <person name="Fuchs M."/>
            <person name="Duesterhoeft A."/>
            <person name="Fritzc C."/>
            <person name="Holzer E."/>
            <person name="Moestl D."/>
            <person name="Hilbert H."/>
            <person name="Borzym K."/>
            <person name="Langer I."/>
            <person name="Beck A."/>
            <person name="Lehrach H."/>
            <person name="Reinhardt R."/>
            <person name="Pohl T.M."/>
            <person name="Eger P."/>
            <person name="Zimmermann W."/>
            <person name="Wedler H."/>
            <person name="Wambutt R."/>
            <person name="Purnelle B."/>
            <person name="Goffeau A."/>
            <person name="Cadieu E."/>
            <person name="Dreano S."/>
            <person name="Gloux S."/>
            <person name="Lelaure V."/>
            <person name="Mottier S."/>
            <person name="Galibert F."/>
            <person name="Aves S.J."/>
            <person name="Xiang Z."/>
            <person name="Hunt C."/>
            <person name="Moore K."/>
            <person name="Hurst S.M."/>
            <person name="Lucas M."/>
            <person name="Rochet M."/>
            <person name="Gaillardin C."/>
            <person name="Tallada V.A."/>
            <person name="Garzon A."/>
            <person name="Thode G."/>
            <person name="Daga R.R."/>
            <person name="Cruzado L."/>
            <person name="Jimenez J."/>
            <person name="Sanchez M."/>
            <person name="del Rey F."/>
            <person name="Benito J."/>
            <person name="Dominguez A."/>
            <person name="Revuelta J.L."/>
            <person name="Moreno S."/>
            <person name="Armstrong J."/>
            <person name="Forsburg S.L."/>
            <person name="Cerutti L."/>
            <person name="Lowe T."/>
            <person name="McCombie W.R."/>
            <person name="Paulsen I."/>
            <person name="Potashkin J."/>
            <person name="Shpakovski G.V."/>
            <person name="Ussery D."/>
            <person name="Barrell B.G."/>
            <person name="Nurse P."/>
        </authorList>
    </citation>
    <scope>NUCLEOTIDE SEQUENCE [LARGE SCALE GENOMIC DNA]</scope>
    <source>
        <strain>972 / ATCC 24843</strain>
    </source>
</reference>
<reference key="2">
    <citation type="journal article" date="2006" name="Nat. Biotechnol.">
        <title>ORFeome cloning and global analysis of protein localization in the fission yeast Schizosaccharomyces pombe.</title>
        <authorList>
            <person name="Matsuyama A."/>
            <person name="Arai R."/>
            <person name="Yashiroda Y."/>
            <person name="Shirai A."/>
            <person name="Kamata A."/>
            <person name="Sekido S."/>
            <person name="Kobayashi Y."/>
            <person name="Hashimoto A."/>
            <person name="Hamamoto M."/>
            <person name="Hiraoka Y."/>
            <person name="Horinouchi S."/>
            <person name="Yoshida M."/>
        </authorList>
    </citation>
    <scope>SUBCELLULAR LOCATION [LARGE SCALE ANALYSIS]</scope>
</reference>
<reference key="3">
    <citation type="journal article" date="2008" name="J. Proteome Res.">
        <title>Phosphoproteome analysis of fission yeast.</title>
        <authorList>
            <person name="Wilson-Grady J.T."/>
            <person name="Villen J."/>
            <person name="Gygi S.P."/>
        </authorList>
    </citation>
    <scope>PHOSPHORYLATION [LARGE SCALE ANALYSIS] AT SER-12</scope>
    <scope>IDENTIFICATION BY MASS SPECTROMETRY</scope>
</reference>
<accession>O74904</accession>
<evidence type="ECO:0000250" key="1">
    <source>
        <dbReference type="UniProtKB" id="P0CX84"/>
    </source>
</evidence>
<evidence type="ECO:0000269" key="2">
    <source>
    </source>
</evidence>
<evidence type="ECO:0000269" key="3">
    <source>
    </source>
</evidence>
<evidence type="ECO:0000305" key="4"/>
<evidence type="ECO:0007829" key="5">
    <source>
        <dbReference type="PDB" id="8EUY"/>
    </source>
</evidence>
<evidence type="ECO:0007829" key="6">
    <source>
        <dbReference type="PDB" id="8EV3"/>
    </source>
</evidence>
<dbReference type="EMBL" id="CU329672">
    <property type="protein sequence ID" value="CAA21057.1"/>
    <property type="molecule type" value="Genomic_DNA"/>
</dbReference>
<dbReference type="PIR" id="T41471">
    <property type="entry name" value="T41471"/>
</dbReference>
<dbReference type="RefSeq" id="NP_587693.1">
    <property type="nucleotide sequence ID" value="NM_001022688.2"/>
</dbReference>
<dbReference type="PDB" id="8ESQ">
    <property type="method" value="EM"/>
    <property type="resolution" value="2.80 A"/>
    <property type="chains" value="h=1-122"/>
</dbReference>
<dbReference type="PDB" id="8ESR">
    <property type="method" value="EM"/>
    <property type="resolution" value="3.20 A"/>
    <property type="chains" value="h=1-122"/>
</dbReference>
<dbReference type="PDB" id="8ETC">
    <property type="method" value="EM"/>
    <property type="resolution" value="3.10 A"/>
    <property type="chains" value="h=1-122"/>
</dbReference>
<dbReference type="PDB" id="8ETG">
    <property type="method" value="EM"/>
    <property type="resolution" value="3.40 A"/>
    <property type="chains" value="h=1-122"/>
</dbReference>
<dbReference type="PDB" id="8ETH">
    <property type="method" value="EM"/>
    <property type="resolution" value="3.80 A"/>
    <property type="chains" value="h=1-122"/>
</dbReference>
<dbReference type="PDB" id="8ETI">
    <property type="method" value="EM"/>
    <property type="resolution" value="3.70 A"/>
    <property type="chains" value="h=1-122"/>
</dbReference>
<dbReference type="PDB" id="8ETJ">
    <property type="method" value="EM"/>
    <property type="resolution" value="3.20 A"/>
    <property type="chains" value="h=1-122"/>
</dbReference>
<dbReference type="PDB" id="8EUG">
    <property type="method" value="EM"/>
    <property type="resolution" value="2.80 A"/>
    <property type="chains" value="h=1-122"/>
</dbReference>
<dbReference type="PDB" id="8EUI">
    <property type="method" value="EM"/>
    <property type="resolution" value="3.10 A"/>
    <property type="chains" value="h=1-122"/>
</dbReference>
<dbReference type="PDB" id="8EUP">
    <property type="method" value="EM"/>
    <property type="resolution" value="3.10 A"/>
    <property type="chains" value="h=1-122"/>
</dbReference>
<dbReference type="PDB" id="8EUY">
    <property type="method" value="EM"/>
    <property type="resolution" value="3.00 A"/>
    <property type="chains" value="h=1-122"/>
</dbReference>
<dbReference type="PDB" id="8EV3">
    <property type="method" value="EM"/>
    <property type="resolution" value="3.00 A"/>
    <property type="chains" value="h=1-122"/>
</dbReference>
<dbReference type="PDB" id="9AXT">
    <property type="method" value="EM"/>
    <property type="resolution" value="2.40 A"/>
    <property type="chains" value="Bt=1-122"/>
</dbReference>
<dbReference type="PDB" id="9AXU">
    <property type="method" value="EM"/>
    <property type="resolution" value="1.94 A"/>
    <property type="chains" value="t=1-122"/>
</dbReference>
<dbReference type="PDB" id="9AXV">
    <property type="method" value="EM"/>
    <property type="resolution" value="2.40 A"/>
    <property type="chains" value="Bt=1-122"/>
</dbReference>
<dbReference type="PDBsum" id="8ESQ"/>
<dbReference type="PDBsum" id="8ESR"/>
<dbReference type="PDBsum" id="8ETC"/>
<dbReference type="PDBsum" id="8ETG"/>
<dbReference type="PDBsum" id="8ETH"/>
<dbReference type="PDBsum" id="8ETI"/>
<dbReference type="PDBsum" id="8ETJ"/>
<dbReference type="PDBsum" id="8EUG"/>
<dbReference type="PDBsum" id="8EUI"/>
<dbReference type="PDBsum" id="8EUP"/>
<dbReference type="PDBsum" id="8EUY"/>
<dbReference type="PDBsum" id="8EV3"/>
<dbReference type="PDBsum" id="9AXT"/>
<dbReference type="PDBsum" id="9AXU"/>
<dbReference type="PDBsum" id="9AXV"/>
<dbReference type="EMDB" id="EMD-43972"/>
<dbReference type="EMDB" id="EMD-43973"/>
<dbReference type="EMDB" id="EMD-43976"/>
<dbReference type="SMR" id="O74904"/>
<dbReference type="BioGRID" id="275875">
    <property type="interactions" value="10"/>
</dbReference>
<dbReference type="FunCoup" id="O74904">
    <property type="interactions" value="459"/>
</dbReference>
<dbReference type="IntAct" id="O74904">
    <property type="interactions" value="2"/>
</dbReference>
<dbReference type="STRING" id="284812.O74904"/>
<dbReference type="iPTMnet" id="O74904"/>
<dbReference type="PaxDb" id="4896-SPCC613.05c.1"/>
<dbReference type="EnsemblFungi" id="SPCC613.05c.1">
    <property type="protein sequence ID" value="SPCC613.05c.1:pep"/>
    <property type="gene ID" value="SPCC613.05c"/>
</dbReference>
<dbReference type="GeneID" id="2539308"/>
<dbReference type="KEGG" id="spo:2539308"/>
<dbReference type="PomBase" id="SPCC613.05c">
    <property type="gene designation" value="rpl35"/>
</dbReference>
<dbReference type="VEuPathDB" id="FungiDB:SPCC613.05c"/>
<dbReference type="eggNOG" id="KOG3436">
    <property type="taxonomic scope" value="Eukaryota"/>
</dbReference>
<dbReference type="HOGENOM" id="CLU_110381_1_1_1"/>
<dbReference type="InParanoid" id="O74904"/>
<dbReference type="OMA" id="VMNQKAR"/>
<dbReference type="PhylomeDB" id="O74904"/>
<dbReference type="Reactome" id="R-SPO-156827">
    <property type="pathway name" value="L13a-mediated translational silencing of Ceruloplasmin expression"/>
</dbReference>
<dbReference type="Reactome" id="R-SPO-1799339">
    <property type="pathway name" value="SRP-dependent cotranslational protein targeting to membrane"/>
</dbReference>
<dbReference type="Reactome" id="R-SPO-72689">
    <property type="pathway name" value="Formation of a pool of free 40S subunits"/>
</dbReference>
<dbReference type="Reactome" id="R-SPO-72706">
    <property type="pathway name" value="GTP hydrolysis and joining of the 60S ribosomal subunit"/>
</dbReference>
<dbReference type="Reactome" id="R-SPO-975956">
    <property type="pathway name" value="Nonsense Mediated Decay (NMD) independent of the Exon Junction Complex (EJC)"/>
</dbReference>
<dbReference type="Reactome" id="R-SPO-975957">
    <property type="pathway name" value="Nonsense Mediated Decay (NMD) enhanced by the Exon Junction Complex (EJC)"/>
</dbReference>
<dbReference type="PRO" id="PR:O74904"/>
<dbReference type="Proteomes" id="UP000002485">
    <property type="component" value="Chromosome III"/>
</dbReference>
<dbReference type="GO" id="GO:0005829">
    <property type="term" value="C:cytosol"/>
    <property type="evidence" value="ECO:0007005"/>
    <property type="project" value="PomBase"/>
</dbReference>
<dbReference type="GO" id="GO:0022625">
    <property type="term" value="C:cytosolic large ribosomal subunit"/>
    <property type="evidence" value="ECO:0000269"/>
    <property type="project" value="PomBase"/>
</dbReference>
<dbReference type="GO" id="GO:0005730">
    <property type="term" value="C:nucleolus"/>
    <property type="evidence" value="ECO:0007005"/>
    <property type="project" value="PomBase"/>
</dbReference>
<dbReference type="GO" id="GO:0030684">
    <property type="term" value="C:preribosome"/>
    <property type="evidence" value="ECO:0000314"/>
    <property type="project" value="PomBase"/>
</dbReference>
<dbReference type="GO" id="GO:0003729">
    <property type="term" value="F:mRNA binding"/>
    <property type="evidence" value="ECO:0000318"/>
    <property type="project" value="GO_Central"/>
</dbReference>
<dbReference type="GO" id="GO:0003735">
    <property type="term" value="F:structural constituent of ribosome"/>
    <property type="evidence" value="ECO:0000318"/>
    <property type="project" value="GO_Central"/>
</dbReference>
<dbReference type="GO" id="GO:0002181">
    <property type="term" value="P:cytoplasmic translation"/>
    <property type="evidence" value="ECO:0000266"/>
    <property type="project" value="PomBase"/>
</dbReference>
<dbReference type="GO" id="GO:0000463">
    <property type="term" value="P:maturation of LSU-rRNA from tricistronic rRNA transcript (SSU-rRNA, 5.8S rRNA, LSU-rRNA)"/>
    <property type="evidence" value="ECO:0000318"/>
    <property type="project" value="GO_Central"/>
</dbReference>
<dbReference type="CDD" id="cd00427">
    <property type="entry name" value="Ribosomal_L29_HIP"/>
    <property type="match status" value="1"/>
</dbReference>
<dbReference type="FunFam" id="1.10.287.310:FF:000002">
    <property type="entry name" value="60S ribosomal protein L35"/>
    <property type="match status" value="1"/>
</dbReference>
<dbReference type="FunFam" id="6.10.250.3450:FF:000001">
    <property type="entry name" value="60S ribosomal protein L35"/>
    <property type="match status" value="1"/>
</dbReference>
<dbReference type="Gene3D" id="1.10.287.310">
    <property type="match status" value="1"/>
</dbReference>
<dbReference type="Gene3D" id="6.10.250.3450">
    <property type="match status" value="1"/>
</dbReference>
<dbReference type="HAMAP" id="MF_00374">
    <property type="entry name" value="Ribosomal_uL29"/>
    <property type="match status" value="1"/>
</dbReference>
<dbReference type="InterPro" id="IPR001854">
    <property type="entry name" value="Ribosomal_uL29"/>
</dbReference>
<dbReference type="InterPro" id="IPR018254">
    <property type="entry name" value="Ribosomal_uL29_CS"/>
</dbReference>
<dbReference type="InterPro" id="IPR045059">
    <property type="entry name" value="Ribosomal_uL29_euk"/>
</dbReference>
<dbReference type="InterPro" id="IPR036049">
    <property type="entry name" value="Ribosomal_uL29_sf"/>
</dbReference>
<dbReference type="NCBIfam" id="TIGR00012">
    <property type="entry name" value="L29"/>
    <property type="match status" value="1"/>
</dbReference>
<dbReference type="PANTHER" id="PTHR45722">
    <property type="entry name" value="60S RIBOSOMAL PROTEIN L35"/>
    <property type="match status" value="1"/>
</dbReference>
<dbReference type="PANTHER" id="PTHR45722:SF2">
    <property type="entry name" value="LARGE RIBOSOMAL SUBUNIT PROTEIN UL29-RELATED"/>
    <property type="match status" value="1"/>
</dbReference>
<dbReference type="Pfam" id="PF00831">
    <property type="entry name" value="Ribosomal_L29"/>
    <property type="match status" value="1"/>
</dbReference>
<dbReference type="SUPFAM" id="SSF46561">
    <property type="entry name" value="Ribosomal protein L29 (L29p)"/>
    <property type="match status" value="1"/>
</dbReference>
<dbReference type="PROSITE" id="PS00579">
    <property type="entry name" value="RIBOSOMAL_L29"/>
    <property type="match status" value="1"/>
</dbReference>
<name>RL35_SCHPO</name>
<gene>
    <name type="primary">rpl35</name>
    <name type="ORF">SPCC613.05c</name>
</gene>
<comment type="function">
    <text evidence="1">Component of the ribosome, a large ribonucleoprotein complex responsible for the synthesis of proteins in the cell. The small ribosomal subunit (SSU) binds messenger RNAs (mRNAs) and translates the encoded message by selecting cognate aminoacyl-transfer RNA (tRNA) molecules. The large subunit (LSU) contains the ribosomal catalytic site termed the peptidyl transferase center (PTC), which catalyzes the formation of peptide bonds, thereby polymerizing the amino acids delivered by tRNAs into a polypeptide chain. The nascent polypeptides leave the ribosome through a tunnel in the LSU and interact with protein factors that function in enzymatic processing, targeting, and the membrane insertion of nascent chains at the exit of the ribosomal tunnel.</text>
</comment>
<comment type="subunit">
    <text evidence="1">Component of the large ribosomal subunit (LSU). Mature yeast ribosomes consist of a small (40S) and a large (60S) subunit. The 40S small subunit contains 1 molecule of ribosomal RNA (18S rRNA) and at least 33 different proteins. The large 60S subunit contains 3 rRNA molecules (25S, 5.8S and 5S rRNA) and at least 46 different proteins. uL29 is associated with the polypeptide exit tunnel.</text>
</comment>
<comment type="subcellular location">
    <subcellularLocation>
        <location evidence="2">Cytoplasm</location>
    </subcellularLocation>
    <subcellularLocation>
        <location evidence="2">Nucleus</location>
        <location evidence="2">Nucleolus</location>
    </subcellularLocation>
</comment>
<comment type="similarity">
    <text evidence="4">Belongs to the universal ribosomal protein uL29 family.</text>
</comment>
<sequence length="122" mass="14302">MALKTFELRKQSQENLAEQLQELRQELASLRVQKIAGGSGSKLSKIKTTRKDIARILTVINESNRLAAREAYKNKKYIPLDLRQKKTRAIRRALTPYEQSRKTLKQIKKERYFPLRKYALKA</sequence>
<organism>
    <name type="scientific">Schizosaccharomyces pombe (strain 972 / ATCC 24843)</name>
    <name type="common">Fission yeast</name>
    <dbReference type="NCBI Taxonomy" id="284812"/>
    <lineage>
        <taxon>Eukaryota</taxon>
        <taxon>Fungi</taxon>
        <taxon>Dikarya</taxon>
        <taxon>Ascomycota</taxon>
        <taxon>Taphrinomycotina</taxon>
        <taxon>Schizosaccharomycetes</taxon>
        <taxon>Schizosaccharomycetales</taxon>
        <taxon>Schizosaccharomycetaceae</taxon>
        <taxon>Schizosaccharomyces</taxon>
    </lineage>
</organism>
<protein>
    <recommendedName>
        <fullName evidence="4">Large ribosomal subunit protein uL29</fullName>
    </recommendedName>
    <alternativeName>
        <fullName>60S ribosomal protein L35</fullName>
    </alternativeName>
</protein>
<proteinExistence type="evidence at protein level"/>
<feature type="chain" id="PRO_0000130551" description="Large ribosomal subunit protein uL29">
    <location>
        <begin position="1"/>
        <end position="122"/>
    </location>
</feature>
<feature type="modified residue" description="Phosphoserine" evidence="3">
    <location>
        <position position="12"/>
    </location>
</feature>
<feature type="helix" evidence="5">
    <location>
        <begin position="5"/>
        <end position="8"/>
    </location>
</feature>
<feature type="strand" evidence="6">
    <location>
        <begin position="9"/>
        <end position="11"/>
    </location>
</feature>
<feature type="helix" evidence="5">
    <location>
        <begin position="13"/>
        <end position="35"/>
    </location>
</feature>
<feature type="helix" evidence="5">
    <location>
        <begin position="42"/>
        <end position="71"/>
    </location>
</feature>
<feature type="turn" evidence="5">
    <location>
        <begin position="72"/>
        <end position="74"/>
    </location>
</feature>
<feature type="helix" evidence="5">
    <location>
        <begin position="80"/>
        <end position="82"/>
    </location>
</feature>
<feature type="helix" evidence="5">
    <location>
        <begin position="88"/>
        <end position="92"/>
    </location>
</feature>
<feature type="helix" evidence="5">
    <location>
        <begin position="96"/>
        <end position="99"/>
    </location>
</feature>
<feature type="helix" evidence="5">
    <location>
        <begin position="104"/>
        <end position="112"/>
    </location>
</feature>
<feature type="strand" evidence="5">
    <location>
        <begin position="117"/>
        <end position="121"/>
    </location>
</feature>